<evidence type="ECO:0000255" key="1">
    <source>
        <dbReference type="HAMAP-Rule" id="MF_00002"/>
    </source>
</evidence>
<dbReference type="EMBL" id="FM178379">
    <property type="protein sequence ID" value="CAQ78203.1"/>
    <property type="molecule type" value="Genomic_DNA"/>
</dbReference>
<dbReference type="RefSeq" id="WP_012549327.1">
    <property type="nucleotide sequence ID" value="NC_011312.1"/>
</dbReference>
<dbReference type="SMR" id="B6EMC2"/>
<dbReference type="KEGG" id="vsa:VSAL_I0518"/>
<dbReference type="eggNOG" id="COG1781">
    <property type="taxonomic scope" value="Bacteria"/>
</dbReference>
<dbReference type="HOGENOM" id="CLU_128576_0_0_6"/>
<dbReference type="Proteomes" id="UP000001730">
    <property type="component" value="Chromosome 1"/>
</dbReference>
<dbReference type="GO" id="GO:0009347">
    <property type="term" value="C:aspartate carbamoyltransferase complex"/>
    <property type="evidence" value="ECO:0007669"/>
    <property type="project" value="InterPro"/>
</dbReference>
<dbReference type="GO" id="GO:0046872">
    <property type="term" value="F:metal ion binding"/>
    <property type="evidence" value="ECO:0007669"/>
    <property type="project" value="UniProtKB-KW"/>
</dbReference>
<dbReference type="GO" id="GO:0006207">
    <property type="term" value="P:'de novo' pyrimidine nucleobase biosynthetic process"/>
    <property type="evidence" value="ECO:0007669"/>
    <property type="project" value="InterPro"/>
</dbReference>
<dbReference type="GO" id="GO:0006221">
    <property type="term" value="P:pyrimidine nucleotide biosynthetic process"/>
    <property type="evidence" value="ECO:0007669"/>
    <property type="project" value="UniProtKB-UniRule"/>
</dbReference>
<dbReference type="Gene3D" id="2.30.30.20">
    <property type="entry name" value="Aspartate carbamoyltransferase regulatory subunit, C-terminal domain"/>
    <property type="match status" value="1"/>
</dbReference>
<dbReference type="Gene3D" id="3.30.70.140">
    <property type="entry name" value="Aspartate carbamoyltransferase regulatory subunit, N-terminal domain"/>
    <property type="match status" value="1"/>
</dbReference>
<dbReference type="HAMAP" id="MF_00002">
    <property type="entry name" value="Asp_carb_tr_reg"/>
    <property type="match status" value="1"/>
</dbReference>
<dbReference type="InterPro" id="IPR020545">
    <property type="entry name" value="Asp_carbamoyltransf_reg_N"/>
</dbReference>
<dbReference type="InterPro" id="IPR002801">
    <property type="entry name" value="Asp_carbamoylTrfase_reg"/>
</dbReference>
<dbReference type="InterPro" id="IPR020542">
    <property type="entry name" value="Asp_carbamoyltrfase_reg_C"/>
</dbReference>
<dbReference type="InterPro" id="IPR036792">
    <property type="entry name" value="Asp_carbatrfase_reg_C_sf"/>
</dbReference>
<dbReference type="InterPro" id="IPR036793">
    <property type="entry name" value="Asp_carbatrfase_reg_N_sf"/>
</dbReference>
<dbReference type="NCBIfam" id="TIGR00240">
    <property type="entry name" value="ATCase_reg"/>
    <property type="match status" value="1"/>
</dbReference>
<dbReference type="PANTHER" id="PTHR35805">
    <property type="entry name" value="ASPARTATE CARBAMOYLTRANSFERASE REGULATORY CHAIN"/>
    <property type="match status" value="1"/>
</dbReference>
<dbReference type="PANTHER" id="PTHR35805:SF1">
    <property type="entry name" value="ASPARTATE CARBAMOYLTRANSFERASE REGULATORY CHAIN"/>
    <property type="match status" value="1"/>
</dbReference>
<dbReference type="Pfam" id="PF01948">
    <property type="entry name" value="PyrI"/>
    <property type="match status" value="1"/>
</dbReference>
<dbReference type="Pfam" id="PF02748">
    <property type="entry name" value="PyrI_C"/>
    <property type="match status" value="1"/>
</dbReference>
<dbReference type="SUPFAM" id="SSF57825">
    <property type="entry name" value="Aspartate carbamoyltransferase, Regulatory-chain, C-terminal domain"/>
    <property type="match status" value="1"/>
</dbReference>
<dbReference type="SUPFAM" id="SSF54893">
    <property type="entry name" value="Aspartate carbamoyltransferase, Regulatory-chain, N-terminal domain"/>
    <property type="match status" value="1"/>
</dbReference>
<accession>B6EMC2</accession>
<gene>
    <name evidence="1" type="primary">pyrI</name>
    <name type="ordered locus">VSAL_I0518</name>
</gene>
<organism>
    <name type="scientific">Aliivibrio salmonicida (strain LFI1238)</name>
    <name type="common">Vibrio salmonicida (strain LFI1238)</name>
    <dbReference type="NCBI Taxonomy" id="316275"/>
    <lineage>
        <taxon>Bacteria</taxon>
        <taxon>Pseudomonadati</taxon>
        <taxon>Pseudomonadota</taxon>
        <taxon>Gammaproteobacteria</taxon>
        <taxon>Vibrionales</taxon>
        <taxon>Vibrionaceae</taxon>
        <taxon>Aliivibrio</taxon>
    </lineage>
</organism>
<reference key="1">
    <citation type="journal article" date="2008" name="BMC Genomics">
        <title>The genome sequence of the fish pathogen Aliivibrio salmonicida strain LFI1238 shows extensive evidence of gene decay.</title>
        <authorList>
            <person name="Hjerde E."/>
            <person name="Lorentzen M.S."/>
            <person name="Holden M.T."/>
            <person name="Seeger K."/>
            <person name="Paulsen S."/>
            <person name="Bason N."/>
            <person name="Churcher C."/>
            <person name="Harris D."/>
            <person name="Norbertczak H."/>
            <person name="Quail M.A."/>
            <person name="Sanders S."/>
            <person name="Thurston S."/>
            <person name="Parkhill J."/>
            <person name="Willassen N.P."/>
            <person name="Thomson N.R."/>
        </authorList>
    </citation>
    <scope>NUCLEOTIDE SEQUENCE [LARGE SCALE GENOMIC DNA]</scope>
    <source>
        <strain>LFI1238</strain>
    </source>
</reference>
<feature type="chain" id="PRO_1000088820" description="Aspartate carbamoyltransferase regulatory chain">
    <location>
        <begin position="1"/>
        <end position="154"/>
    </location>
</feature>
<feature type="binding site" evidence="1">
    <location>
        <position position="109"/>
    </location>
    <ligand>
        <name>Zn(2+)</name>
        <dbReference type="ChEBI" id="CHEBI:29105"/>
    </ligand>
</feature>
<feature type="binding site" evidence="1">
    <location>
        <position position="114"/>
    </location>
    <ligand>
        <name>Zn(2+)</name>
        <dbReference type="ChEBI" id="CHEBI:29105"/>
    </ligand>
</feature>
<feature type="binding site" evidence="1">
    <location>
        <position position="138"/>
    </location>
    <ligand>
        <name>Zn(2+)</name>
        <dbReference type="ChEBI" id="CHEBI:29105"/>
    </ligand>
</feature>
<feature type="binding site" evidence="1">
    <location>
        <position position="141"/>
    </location>
    <ligand>
        <name>Zn(2+)</name>
        <dbReference type="ChEBI" id="CHEBI:29105"/>
    </ligand>
</feature>
<keyword id="KW-0479">Metal-binding</keyword>
<keyword id="KW-0665">Pyrimidine biosynthesis</keyword>
<keyword id="KW-0862">Zinc</keyword>
<comment type="function">
    <text evidence="1">Involved in allosteric regulation of aspartate carbamoyltransferase.</text>
</comment>
<comment type="cofactor">
    <cofactor evidence="1">
        <name>Zn(2+)</name>
        <dbReference type="ChEBI" id="CHEBI:29105"/>
    </cofactor>
    <text evidence="1">Binds 1 zinc ion per subunit.</text>
</comment>
<comment type="subunit">
    <text evidence="1">Contains catalytic and regulatory chains.</text>
</comment>
<comment type="similarity">
    <text evidence="1">Belongs to the PyrI family.</text>
</comment>
<protein>
    <recommendedName>
        <fullName evidence="1">Aspartate carbamoyltransferase regulatory chain</fullName>
    </recommendedName>
</protein>
<name>PYRI_ALISL</name>
<proteinExistence type="inferred from homology"/>
<sequence>MSNKTELRVEAIKNGTVIDHIPANIGVKVLKLFQMDKTAERVTIGLNLPSSALGSKDLLKIENTFVTPEQASKLALYAPHATVNQIENYEVVKKIPLILPKQITGVFECPNSNCITHGEPVDSSFKVIAKKGNIHLKCKYCEKVYSQEVVTDLH</sequence>